<sequence>MISDIRKDAEVRMDKCVEAFKTQISKIRTGRASPSLLDGIVVEYYGTPTPLRQLASVTVEDSRTLKINVFDRSMSPAVEKAIMASDLGLNPNSAGSDIRVPLPPLTEERRKDLTKIVRGEAEQARVAVRNVRRDANDKVKALLKDKEISEDDDRRSQDDVQKLTDAAIKKIEAALADKEAELMQF</sequence>
<name>RRF_ECOSE</name>
<feature type="chain" id="PRO_1000090739" description="Ribosome-recycling factor">
    <location>
        <begin position="1"/>
        <end position="185"/>
    </location>
</feature>
<feature type="modified residue" description="N6-acetyllysine" evidence="1">
    <location>
        <position position="162"/>
    </location>
</feature>
<protein>
    <recommendedName>
        <fullName evidence="1">Ribosome-recycling factor</fullName>
        <shortName evidence="1">RRF</shortName>
    </recommendedName>
    <alternativeName>
        <fullName evidence="1">Ribosome-releasing factor</fullName>
    </alternativeName>
</protein>
<accession>B6HZE6</accession>
<proteinExistence type="inferred from homology"/>
<reference key="1">
    <citation type="journal article" date="2008" name="DNA Res.">
        <title>Complete genome sequence and comparative analysis of the wild-type commensal Escherichia coli strain SE11 isolated from a healthy adult.</title>
        <authorList>
            <person name="Oshima K."/>
            <person name="Toh H."/>
            <person name="Ogura Y."/>
            <person name="Sasamoto H."/>
            <person name="Morita H."/>
            <person name="Park S.-H."/>
            <person name="Ooka T."/>
            <person name="Iyoda S."/>
            <person name="Taylor T.D."/>
            <person name="Hayashi T."/>
            <person name="Itoh K."/>
            <person name="Hattori M."/>
        </authorList>
    </citation>
    <scope>NUCLEOTIDE SEQUENCE [LARGE SCALE GENOMIC DNA]</scope>
    <source>
        <strain>SE11</strain>
    </source>
</reference>
<comment type="function">
    <text evidence="1">Responsible for the release of ribosomes from messenger RNA at the termination of protein biosynthesis. May increase the efficiency of translation by recycling ribosomes from one round of translation to another.</text>
</comment>
<comment type="subcellular location">
    <subcellularLocation>
        <location evidence="1">Cytoplasm</location>
    </subcellularLocation>
</comment>
<comment type="similarity">
    <text evidence="1">Belongs to the RRF family.</text>
</comment>
<organism>
    <name type="scientific">Escherichia coli (strain SE11)</name>
    <dbReference type="NCBI Taxonomy" id="409438"/>
    <lineage>
        <taxon>Bacteria</taxon>
        <taxon>Pseudomonadati</taxon>
        <taxon>Pseudomonadota</taxon>
        <taxon>Gammaproteobacteria</taxon>
        <taxon>Enterobacterales</taxon>
        <taxon>Enterobacteriaceae</taxon>
        <taxon>Escherichia</taxon>
    </lineage>
</organism>
<evidence type="ECO:0000255" key="1">
    <source>
        <dbReference type="HAMAP-Rule" id="MF_00040"/>
    </source>
</evidence>
<keyword id="KW-0007">Acetylation</keyword>
<keyword id="KW-0963">Cytoplasm</keyword>
<keyword id="KW-0648">Protein biosynthesis</keyword>
<dbReference type="EMBL" id="AP009240">
    <property type="protein sequence ID" value="BAG75695.1"/>
    <property type="molecule type" value="Genomic_DNA"/>
</dbReference>
<dbReference type="RefSeq" id="WP_000622418.1">
    <property type="nucleotide sequence ID" value="NC_011415.1"/>
</dbReference>
<dbReference type="SMR" id="B6HZE6"/>
<dbReference type="GeneID" id="93777253"/>
<dbReference type="KEGG" id="ecy:ECSE_0171"/>
<dbReference type="HOGENOM" id="CLU_073981_2_1_6"/>
<dbReference type="Proteomes" id="UP000008199">
    <property type="component" value="Chromosome"/>
</dbReference>
<dbReference type="GO" id="GO:0005829">
    <property type="term" value="C:cytosol"/>
    <property type="evidence" value="ECO:0007669"/>
    <property type="project" value="GOC"/>
</dbReference>
<dbReference type="GO" id="GO:0043023">
    <property type="term" value="F:ribosomal large subunit binding"/>
    <property type="evidence" value="ECO:0007669"/>
    <property type="project" value="TreeGrafter"/>
</dbReference>
<dbReference type="GO" id="GO:0002184">
    <property type="term" value="P:cytoplasmic translational termination"/>
    <property type="evidence" value="ECO:0007669"/>
    <property type="project" value="TreeGrafter"/>
</dbReference>
<dbReference type="CDD" id="cd00520">
    <property type="entry name" value="RRF"/>
    <property type="match status" value="1"/>
</dbReference>
<dbReference type="FunFam" id="1.10.132.20:FF:000001">
    <property type="entry name" value="Ribosome-recycling factor"/>
    <property type="match status" value="1"/>
</dbReference>
<dbReference type="FunFam" id="3.30.1360.40:FF:000001">
    <property type="entry name" value="Ribosome-recycling factor"/>
    <property type="match status" value="1"/>
</dbReference>
<dbReference type="Gene3D" id="3.30.1360.40">
    <property type="match status" value="1"/>
</dbReference>
<dbReference type="Gene3D" id="1.10.132.20">
    <property type="entry name" value="Ribosome-recycling factor"/>
    <property type="match status" value="1"/>
</dbReference>
<dbReference type="HAMAP" id="MF_00040">
    <property type="entry name" value="RRF"/>
    <property type="match status" value="1"/>
</dbReference>
<dbReference type="InterPro" id="IPR002661">
    <property type="entry name" value="Ribosome_recyc_fac"/>
</dbReference>
<dbReference type="InterPro" id="IPR023584">
    <property type="entry name" value="Ribosome_recyc_fac_dom"/>
</dbReference>
<dbReference type="InterPro" id="IPR036191">
    <property type="entry name" value="RRF_sf"/>
</dbReference>
<dbReference type="NCBIfam" id="TIGR00496">
    <property type="entry name" value="frr"/>
    <property type="match status" value="1"/>
</dbReference>
<dbReference type="PANTHER" id="PTHR20982:SF3">
    <property type="entry name" value="MITOCHONDRIAL RIBOSOME RECYCLING FACTOR PSEUDO 1"/>
    <property type="match status" value="1"/>
</dbReference>
<dbReference type="PANTHER" id="PTHR20982">
    <property type="entry name" value="RIBOSOME RECYCLING FACTOR"/>
    <property type="match status" value="1"/>
</dbReference>
<dbReference type="Pfam" id="PF01765">
    <property type="entry name" value="RRF"/>
    <property type="match status" value="1"/>
</dbReference>
<dbReference type="SUPFAM" id="SSF55194">
    <property type="entry name" value="Ribosome recycling factor, RRF"/>
    <property type="match status" value="1"/>
</dbReference>
<gene>
    <name evidence="1" type="primary">frr</name>
    <name type="ordered locus">ECSE_0171</name>
</gene>